<gene>
    <name evidence="1" type="primary">rpsT</name>
    <name type="ordered locus">RPB_4712</name>
</gene>
<comment type="function">
    <text evidence="1">Binds directly to 16S ribosomal RNA.</text>
</comment>
<comment type="similarity">
    <text evidence="1">Belongs to the bacterial ribosomal protein bS20 family.</text>
</comment>
<reference key="1">
    <citation type="submission" date="2006-01" db="EMBL/GenBank/DDBJ databases">
        <title>Complete sequence of Rhodopseudomonas palustris HaA2.</title>
        <authorList>
            <consortium name="US DOE Joint Genome Institute"/>
            <person name="Copeland A."/>
            <person name="Lucas S."/>
            <person name="Lapidus A."/>
            <person name="Barry K."/>
            <person name="Detter J.C."/>
            <person name="Glavina T."/>
            <person name="Hammon N."/>
            <person name="Israni S."/>
            <person name="Pitluck S."/>
            <person name="Chain P."/>
            <person name="Malfatti S."/>
            <person name="Shin M."/>
            <person name="Vergez L."/>
            <person name="Schmutz J."/>
            <person name="Larimer F."/>
            <person name="Land M."/>
            <person name="Hauser L."/>
            <person name="Pelletier D.A."/>
            <person name="Kyrpides N."/>
            <person name="Anderson I."/>
            <person name="Oda Y."/>
            <person name="Harwood C.S."/>
            <person name="Richardson P."/>
        </authorList>
    </citation>
    <scope>NUCLEOTIDE SEQUENCE [LARGE SCALE GENOMIC DNA]</scope>
    <source>
        <strain>HaA2</strain>
    </source>
</reference>
<name>RS20_RHOP2</name>
<dbReference type="EMBL" id="CP000250">
    <property type="protein sequence ID" value="ABD09395.1"/>
    <property type="molecule type" value="Genomic_DNA"/>
</dbReference>
<dbReference type="RefSeq" id="WP_011443577.1">
    <property type="nucleotide sequence ID" value="NC_007778.1"/>
</dbReference>
<dbReference type="SMR" id="Q2IQW5"/>
<dbReference type="STRING" id="316058.RPB_4712"/>
<dbReference type="KEGG" id="rpb:RPB_4712"/>
<dbReference type="eggNOG" id="COG0268">
    <property type="taxonomic scope" value="Bacteria"/>
</dbReference>
<dbReference type="HOGENOM" id="CLU_160655_3_0_5"/>
<dbReference type="OrthoDB" id="9807974at2"/>
<dbReference type="Proteomes" id="UP000008809">
    <property type="component" value="Chromosome"/>
</dbReference>
<dbReference type="GO" id="GO:0005829">
    <property type="term" value="C:cytosol"/>
    <property type="evidence" value="ECO:0007669"/>
    <property type="project" value="TreeGrafter"/>
</dbReference>
<dbReference type="GO" id="GO:0015935">
    <property type="term" value="C:small ribosomal subunit"/>
    <property type="evidence" value="ECO:0007669"/>
    <property type="project" value="TreeGrafter"/>
</dbReference>
<dbReference type="GO" id="GO:0070181">
    <property type="term" value="F:small ribosomal subunit rRNA binding"/>
    <property type="evidence" value="ECO:0007669"/>
    <property type="project" value="TreeGrafter"/>
</dbReference>
<dbReference type="GO" id="GO:0003735">
    <property type="term" value="F:structural constituent of ribosome"/>
    <property type="evidence" value="ECO:0007669"/>
    <property type="project" value="InterPro"/>
</dbReference>
<dbReference type="GO" id="GO:0006412">
    <property type="term" value="P:translation"/>
    <property type="evidence" value="ECO:0007669"/>
    <property type="project" value="UniProtKB-UniRule"/>
</dbReference>
<dbReference type="Gene3D" id="1.20.58.110">
    <property type="entry name" value="Ribosomal protein S20"/>
    <property type="match status" value="1"/>
</dbReference>
<dbReference type="HAMAP" id="MF_00500">
    <property type="entry name" value="Ribosomal_bS20"/>
    <property type="match status" value="1"/>
</dbReference>
<dbReference type="InterPro" id="IPR002583">
    <property type="entry name" value="Ribosomal_bS20"/>
</dbReference>
<dbReference type="InterPro" id="IPR036510">
    <property type="entry name" value="Ribosomal_bS20_sf"/>
</dbReference>
<dbReference type="NCBIfam" id="TIGR00029">
    <property type="entry name" value="S20"/>
    <property type="match status" value="1"/>
</dbReference>
<dbReference type="PANTHER" id="PTHR33398">
    <property type="entry name" value="30S RIBOSOMAL PROTEIN S20"/>
    <property type="match status" value="1"/>
</dbReference>
<dbReference type="PANTHER" id="PTHR33398:SF1">
    <property type="entry name" value="SMALL RIBOSOMAL SUBUNIT PROTEIN BS20C"/>
    <property type="match status" value="1"/>
</dbReference>
<dbReference type="Pfam" id="PF01649">
    <property type="entry name" value="Ribosomal_S20p"/>
    <property type="match status" value="1"/>
</dbReference>
<dbReference type="SUPFAM" id="SSF46992">
    <property type="entry name" value="Ribosomal protein S20"/>
    <property type="match status" value="1"/>
</dbReference>
<organism>
    <name type="scientific">Rhodopseudomonas palustris (strain HaA2)</name>
    <dbReference type="NCBI Taxonomy" id="316058"/>
    <lineage>
        <taxon>Bacteria</taxon>
        <taxon>Pseudomonadati</taxon>
        <taxon>Pseudomonadota</taxon>
        <taxon>Alphaproteobacteria</taxon>
        <taxon>Hyphomicrobiales</taxon>
        <taxon>Nitrobacteraceae</taxon>
        <taxon>Rhodopseudomonas</taxon>
    </lineage>
</organism>
<protein>
    <recommendedName>
        <fullName evidence="1">Small ribosomal subunit protein bS20</fullName>
    </recommendedName>
    <alternativeName>
        <fullName evidence="3">30S ribosomal protein S20</fullName>
    </alternativeName>
</protein>
<keyword id="KW-1185">Reference proteome</keyword>
<keyword id="KW-0687">Ribonucleoprotein</keyword>
<keyword id="KW-0689">Ribosomal protein</keyword>
<keyword id="KW-0694">RNA-binding</keyword>
<keyword id="KW-0699">rRNA-binding</keyword>
<proteinExistence type="inferred from homology"/>
<accession>Q2IQW5</accession>
<evidence type="ECO:0000255" key="1">
    <source>
        <dbReference type="HAMAP-Rule" id="MF_00500"/>
    </source>
</evidence>
<evidence type="ECO:0000256" key="2">
    <source>
        <dbReference type="SAM" id="MobiDB-lite"/>
    </source>
</evidence>
<evidence type="ECO:0000305" key="3"/>
<feature type="chain" id="PRO_0000260138" description="Small ribosomal subunit protein bS20">
    <location>
        <begin position="1"/>
        <end position="88"/>
    </location>
</feature>
<feature type="region of interest" description="Disordered" evidence="2">
    <location>
        <begin position="1"/>
        <end position="36"/>
    </location>
</feature>
<sequence>MANTSSAKKATRKIARRTAVNKSRRTQMRGSVRTVEEAIASGDREAALKAMANAEPALMRAAQRNIVHKNAASRKVSRLAHRIAQLGK</sequence>